<protein>
    <recommendedName>
        <fullName>Replicase large subunit</fullName>
        <ecNumber>2.1.1.-</ecNumber>
        <ecNumber>2.7.7.-</ecNumber>
        <ecNumber>2.7.7.48</ecNumber>
        <ecNumber>3.6.4.13</ecNumber>
    </recommendedName>
    <alternativeName>
        <fullName>183 kDa protein</fullName>
    </alternativeName>
    <alternativeName>
        <fullName>RNA-directed RNA polymerase</fullName>
    </alternativeName>
    <component>
        <recommendedName>
            <fullName>Replicase small subunit</fullName>
            <ecNumber>2.1.1.-</ecNumber>
            <ecNumber>2.7.7.-</ecNumber>
            <ecNumber>3.6.4.13</ecNumber>
        </recommendedName>
        <alternativeName>
            <fullName>126 kDa protein</fullName>
        </alternativeName>
        <alternativeName>
            <fullName>Methyltransferase/RNA helicase</fullName>
            <shortName>MT/HEL</shortName>
        </alternativeName>
    </component>
</protein>
<sequence>MAYTQTATTSALLDTVRGNNSLVNDLAKRRLYDTAVEEFNARDRRPKVNFSKVISEEQTLIATRAYPEFQITFYNTQNAVHSLAGGLRSLELEYLMMQIPYGSLTYDIGGNFASHLFKGRAYVHCCMPNLDVRDIMRHEGQKDSIELYLSRLERGGKTVPNFQKEAFDRYAELPEDAVCHNTFQTMRHQPMQQSGRVYAIALHSIYDIPADEFGAALLRKNVHTCYAAFHFSENLLLEDSYVNLDEINACFSRDGDKLTFSFASESTLNYCHSYSNILKYVCKTYFPASNREVYMKEFLVTRVNTWFCKFSRIDTFLLYKGVAHKSVDSEQFYTAMEDAWHYKKTLAMCNSERILLEDSSSVNYWFPKMRDMVIVPLFDISLETSKRTRKEVLVSKDFVFTVLNHIRTYQAKALTYANVLSFVESIRSRVIINGVTARSEWDVDKSLLQSLSMTFYLHTKLAVLKDDLLISKFSLGSKTVCQHVWDEISLAFGNAFPSVKERLLNRKLIRVAGDALEIRVPDLYVTFHDRLVTEYKASVDMPALDIRKKMEETEVMYNALSELSVLRESDKFDVDVFSQMCQSLEVDPMTAAKVIVAVMSNESGLTLTFERPTEANVALALQDQEKASEGALVVTSREVEEPSMKGSMARGELQLAGLAGDHPESSYSRNEEIESLEQFHMATADSLIRKQMSSIVYTGPIKVQQMKNFIDSLVASLSAAVSNLVKILKDTAAIDLETRQKFGVLDVASRKWLIKPTAKSHAWGVVETHARKYHVALLEYDEQGVVTCDNWRRVAVSSESVVYSDMAKLRTLRRLLRNGEPHVSSAKVVLVDGVPGCGKTKEILSRVNFDEDLILVPGKQAAEMIRRRANSSGIIVATKDNVKTVDSFMMNFGKSTRCQFKRLFIDEGLMLHTGCVNFLVTMSLCEIAYVYGDTQQIPYINRVSGFPYPAHFAKLEVDEVETRRTTLRCPADVTHYLNRRYEGFVMSTSSVKKSVSQEMVGGAAVINPISKPLHGKILTFTQSDKEALLSRGYSDVHTVHEVQGETYSDVSLVRLTPTPVSIIAGDSPHVLVALSRHTCSLKYYTVVMDPLVSIIRDLEKLSSYLLDMYKVDAGTQXQLQIDSVFKGSNLFVATPKTGDISDMQFYYDKCLPGNSTMMNNFDAVTMRLTDISLNVKDCILDMSKSVAAPKDQIKPLIPMVRTAAEMPRQTGLLENLVAMIKRNFNAPELSGIIDIENTASLVVDKFFDSYLLKEKRKPNKNVSLFSRESLNRWLEKQEQVTIGQLADFDFVDLPAVDQYRHMIKAQPKQKLDTSIQTEYPALQTIVYHSKKINAIFGPLFSELTRQLLDSVDSSRFLFFTRKTPAQIEDFFGDLDSHVPMDVLELDISKYDKSQNEFHCAVEYEIWRRLGFEDFLGEVWKQGHRKTTLKDYTAGIKTCIWYQRKSGDVTTFIGNTVIIAACLASMLPMEKIIKGAFCGDDSLLYFPKGCEFPDVQHSANLMWNFEAKLFKKQYGYFCGRYVIHHDRGCIVYYDPLKLISKLGAKHIKDWEHLEEFRRSLCDVAVSLNNCAYYTQLDDAVWEVHKTAPPGSFVYKSLVKYLSDKVLFRSLFIDGSSC</sequence>
<feature type="chain" id="PRO_0000041166" description="Replicase large subunit">
    <location>
        <begin position="1"/>
        <end position="1616"/>
    </location>
</feature>
<feature type="chain" id="PRO_0000041167" description="Replicase small subunit">
    <location>
        <begin position="1"/>
        <end position="1116"/>
    </location>
</feature>
<feature type="domain" description="Alphavirus-like MT" evidence="4">
    <location>
        <begin position="72"/>
        <end position="281"/>
    </location>
</feature>
<feature type="domain" description="(+)RNA virus helicase ATP-binding">
    <location>
        <begin position="801"/>
        <end position="963"/>
    </location>
</feature>
<feature type="domain" description="(+)RNA virus helicase C-terminal">
    <location>
        <begin position="964"/>
        <end position="1116"/>
    </location>
</feature>
<feature type="domain" description="RdRp catalytic" evidence="3">
    <location>
        <begin position="1380"/>
        <end position="1493"/>
    </location>
</feature>
<feature type="region of interest" description="Methyltransferase" evidence="2">
    <location>
        <begin position="50"/>
        <end position="458"/>
    </location>
</feature>
<feature type="region of interest" description="Helicase" evidence="2">
    <location>
        <begin position="830"/>
        <end position="1085"/>
    </location>
</feature>
<feature type="binding site" evidence="2">
    <location>
        <begin position="833"/>
        <end position="840"/>
    </location>
    <ligand>
        <name>ATP</name>
        <dbReference type="ChEBI" id="CHEBI:30616"/>
    </ligand>
</feature>
<organismHost>
    <name type="scientific">Nicotiana tabacum</name>
    <name type="common">Common tobacco</name>
    <dbReference type="NCBI Taxonomy" id="4097"/>
</organismHost>
<name>RDRP_TMVKR</name>
<organism>
    <name type="scientific">Tobacco mosaic virus (strain Korean NC 82)</name>
    <name type="common">TMV</name>
    <dbReference type="NCBI Taxonomy" id="31746"/>
    <lineage>
        <taxon>Viruses</taxon>
        <taxon>Riboviria</taxon>
        <taxon>Orthornavirae</taxon>
        <taxon>Kitrinoviricota</taxon>
        <taxon>Alsuviricetes</taxon>
        <taxon>Martellivirales</taxon>
        <taxon>Virgaviridae</taxon>
        <taxon>Tobamovirus</taxon>
        <taxon>Tobacco mosaic virus</taxon>
    </lineage>
</organism>
<keyword id="KW-0067">ATP-binding</keyword>
<keyword id="KW-0347">Helicase</keyword>
<keyword id="KW-0945">Host-virus interaction</keyword>
<keyword id="KW-0378">Hydrolase</keyword>
<keyword id="KW-1090">Inhibition of host innate immune response by virus</keyword>
<keyword id="KW-0547">Nucleotide-binding</keyword>
<keyword id="KW-0548">Nucleotidyltransferase</keyword>
<keyword id="KW-1159">RNA suppression of termination</keyword>
<keyword id="KW-0696">RNA-directed RNA polymerase</keyword>
<keyword id="KW-0941">Suppressor of RNA silencing</keyword>
<keyword id="KW-0808">Transferase</keyword>
<keyword id="KW-0899">Viral immunoevasion</keyword>
<keyword id="KW-0693">Viral RNA replication</keyword>
<comment type="function">
    <molecule>Replicase large subunit</molecule>
    <text evidence="1">Is an RNA-dependent RNA polymerase active in viral RNA replication.</text>
</comment>
<comment type="function">
    <molecule>Replicase small subunit</molecule>
    <text evidence="1 5">Is a methyltransferase active in RNA capping and an RNA helicase. Methyltransferase displays a cytoplasmic capping enzyme activity. This function is necessary since all viral RNAs are synthesized in the cytoplasm, and host capping enzymes are restricted to the nucleus. Helicase region probably exhibits NTPase and RNA unwinding activities (Potential). It also acts as a suppressor of RNA-mediated gene silencing, also known as post-transcriptional gene silencing (PTGS), a mechanism of plant viral defense that limits the accumulation of viral RNAs. May mediate silencing suppression through either inhibition of HEN1-mediated siRNA or siRNA demethylation (By similarity).</text>
</comment>
<comment type="catalytic activity">
    <reaction evidence="3">
        <text>RNA(n) + a ribonucleoside 5'-triphosphate = RNA(n+1) + diphosphate</text>
        <dbReference type="Rhea" id="RHEA:21248"/>
        <dbReference type="Rhea" id="RHEA-COMP:14527"/>
        <dbReference type="Rhea" id="RHEA-COMP:17342"/>
        <dbReference type="ChEBI" id="CHEBI:33019"/>
        <dbReference type="ChEBI" id="CHEBI:61557"/>
        <dbReference type="ChEBI" id="CHEBI:140395"/>
        <dbReference type="EC" id="2.7.7.48"/>
    </reaction>
</comment>
<comment type="catalytic activity">
    <reaction>
        <text>ATP + H2O = ADP + phosphate + H(+)</text>
        <dbReference type="Rhea" id="RHEA:13065"/>
        <dbReference type="ChEBI" id="CHEBI:15377"/>
        <dbReference type="ChEBI" id="CHEBI:15378"/>
        <dbReference type="ChEBI" id="CHEBI:30616"/>
        <dbReference type="ChEBI" id="CHEBI:43474"/>
        <dbReference type="ChEBI" id="CHEBI:456216"/>
        <dbReference type="EC" id="3.6.4.13"/>
    </reaction>
</comment>
<comment type="subunit">
    <text evidence="1">Heterodimer of a large and a small subunit.</text>
</comment>
<comment type="miscellaneous">
    <text>This protein is translated as a fusion protein by episodic readthrough of a termination codon. When readthrough of the amber terminator codon TAG occurs between the codons for Gln-1116 and Gln-1118, this results in the addition of the RdRp region to the replicase.</text>
</comment>
<comment type="similarity">
    <text evidence="5">Belongs to the ssRNA positive-strand viruses RNA-directed RNA polymerase family.</text>
</comment>
<reference key="1">
    <citation type="journal article" date="1992" name="Nucleic Acids Res.">
        <title>Nucleotide sequence of cDNA of the tobacco mosaic virus RNA isolated in Korea.</title>
        <authorList>
            <person name="Kob K.H."/>
            <person name="Song E.K."/>
            <person name="Lee S.Y."/>
            <person name="Park Y.I."/>
            <person name="Park W.M."/>
        </authorList>
    </citation>
    <scope>NUCLEOTIDE SEQUENCE [GENOMIC RNA]</scope>
</reference>
<evidence type="ECO:0000250" key="1"/>
<evidence type="ECO:0000255" key="2"/>
<evidence type="ECO:0000255" key="3">
    <source>
        <dbReference type="PROSITE-ProRule" id="PRU00539"/>
    </source>
</evidence>
<evidence type="ECO:0000255" key="4">
    <source>
        <dbReference type="PROSITE-ProRule" id="PRU01079"/>
    </source>
</evidence>
<evidence type="ECO:0000305" key="5"/>
<accession>P30738</accession>
<dbReference type="EC" id="2.1.1.-"/>
<dbReference type="EC" id="2.7.7.-"/>
<dbReference type="EC" id="2.7.7.48"/>
<dbReference type="EC" id="3.6.4.13"/>
<dbReference type="EMBL" id="X68110">
    <property type="status" value="NOT_ANNOTATED_CDS"/>
    <property type="molecule type" value="Genomic_RNA"/>
</dbReference>
<dbReference type="Proteomes" id="UP000008250">
    <property type="component" value="Genome"/>
</dbReference>
<dbReference type="GO" id="GO:0005524">
    <property type="term" value="F:ATP binding"/>
    <property type="evidence" value="ECO:0007669"/>
    <property type="project" value="UniProtKB-KW"/>
</dbReference>
<dbReference type="GO" id="GO:0016887">
    <property type="term" value="F:ATP hydrolysis activity"/>
    <property type="evidence" value="ECO:0007669"/>
    <property type="project" value="RHEA"/>
</dbReference>
<dbReference type="GO" id="GO:0008174">
    <property type="term" value="F:mRNA methyltransferase activity"/>
    <property type="evidence" value="ECO:0007669"/>
    <property type="project" value="InterPro"/>
</dbReference>
<dbReference type="GO" id="GO:0003723">
    <property type="term" value="F:RNA binding"/>
    <property type="evidence" value="ECO:0007669"/>
    <property type="project" value="InterPro"/>
</dbReference>
<dbReference type="GO" id="GO:0003724">
    <property type="term" value="F:RNA helicase activity"/>
    <property type="evidence" value="ECO:0007669"/>
    <property type="project" value="UniProtKB-EC"/>
</dbReference>
<dbReference type="GO" id="GO:0003968">
    <property type="term" value="F:RNA-directed RNA polymerase activity"/>
    <property type="evidence" value="ECO:0007669"/>
    <property type="project" value="UniProtKB-KW"/>
</dbReference>
<dbReference type="GO" id="GO:0006351">
    <property type="term" value="P:DNA-templated transcription"/>
    <property type="evidence" value="ECO:0007669"/>
    <property type="project" value="InterPro"/>
</dbReference>
<dbReference type="GO" id="GO:0016556">
    <property type="term" value="P:mRNA modification"/>
    <property type="evidence" value="ECO:0007669"/>
    <property type="project" value="InterPro"/>
</dbReference>
<dbReference type="GO" id="GO:0006396">
    <property type="term" value="P:RNA processing"/>
    <property type="evidence" value="ECO:0007669"/>
    <property type="project" value="InterPro"/>
</dbReference>
<dbReference type="GO" id="GO:0052170">
    <property type="term" value="P:symbiont-mediated suppression of host innate immune response"/>
    <property type="evidence" value="ECO:0007669"/>
    <property type="project" value="UniProtKB-KW"/>
</dbReference>
<dbReference type="GO" id="GO:0039694">
    <property type="term" value="P:viral RNA genome replication"/>
    <property type="evidence" value="ECO:0007669"/>
    <property type="project" value="InterPro"/>
</dbReference>
<dbReference type="CDD" id="cd23251">
    <property type="entry name" value="Virgaviridae_RdRp"/>
    <property type="match status" value="1"/>
</dbReference>
<dbReference type="Gene3D" id="3.30.450.420">
    <property type="match status" value="1"/>
</dbReference>
<dbReference type="Gene3D" id="3.40.50.300">
    <property type="entry name" value="P-loop containing nucleotide triphosphate hydrolases"/>
    <property type="match status" value="2"/>
</dbReference>
<dbReference type="InterPro" id="IPR027351">
    <property type="entry name" value="(+)RNA_virus_helicase_core_dom"/>
</dbReference>
<dbReference type="InterPro" id="IPR002588">
    <property type="entry name" value="Alphavirus-like_MT_dom"/>
</dbReference>
<dbReference type="InterPro" id="IPR043502">
    <property type="entry name" value="DNA/RNA_pol_sf"/>
</dbReference>
<dbReference type="InterPro" id="IPR027417">
    <property type="entry name" value="P-loop_NTPase"/>
</dbReference>
<dbReference type="InterPro" id="IPR001788">
    <property type="entry name" value="RNA-dep_RNA_pol_alsuvir"/>
</dbReference>
<dbReference type="InterPro" id="IPR007094">
    <property type="entry name" value="RNA-dir_pol_PSvirus"/>
</dbReference>
<dbReference type="InterPro" id="IPR049329">
    <property type="entry name" value="ToMV_Hel_N"/>
</dbReference>
<dbReference type="InterPro" id="IPR047310">
    <property type="entry name" value="Virgaviridae_RdRp"/>
</dbReference>
<dbReference type="Pfam" id="PF00978">
    <property type="entry name" value="RdRP_2"/>
    <property type="match status" value="1"/>
</dbReference>
<dbReference type="Pfam" id="PF20896">
    <property type="entry name" value="ToMV_Hel_N"/>
    <property type="match status" value="1"/>
</dbReference>
<dbReference type="Pfam" id="PF01443">
    <property type="entry name" value="Viral_helicase1"/>
    <property type="match status" value="1"/>
</dbReference>
<dbReference type="Pfam" id="PF01660">
    <property type="entry name" value="Vmethyltransf"/>
    <property type="match status" value="1"/>
</dbReference>
<dbReference type="SUPFAM" id="SSF56672">
    <property type="entry name" value="DNA/RNA polymerases"/>
    <property type="match status" value="1"/>
</dbReference>
<dbReference type="SUPFAM" id="SSF52540">
    <property type="entry name" value="P-loop containing nucleoside triphosphate hydrolases"/>
    <property type="match status" value="1"/>
</dbReference>
<dbReference type="PROSITE" id="PS51743">
    <property type="entry name" value="ALPHAVIRUS_MT"/>
    <property type="match status" value="1"/>
</dbReference>
<dbReference type="PROSITE" id="PS51657">
    <property type="entry name" value="PSRV_HELICASE"/>
    <property type="match status" value="1"/>
</dbReference>
<dbReference type="PROSITE" id="PS50507">
    <property type="entry name" value="RDRP_SSRNA_POS"/>
    <property type="match status" value="1"/>
</dbReference>
<proteinExistence type="inferred from homology"/>